<reference key="1">
    <citation type="journal article" date="2006" name="Lancet">
        <title>Complete genome sequence of USA300, an epidemic clone of community-acquired meticillin-resistant Staphylococcus aureus.</title>
        <authorList>
            <person name="Diep B.A."/>
            <person name="Gill S.R."/>
            <person name="Chang R.F."/>
            <person name="Phan T.H."/>
            <person name="Chen J.H."/>
            <person name="Davidson M.G."/>
            <person name="Lin F."/>
            <person name="Lin J."/>
            <person name="Carleton H.A."/>
            <person name="Mongodin E.F."/>
            <person name="Sensabaugh G.F."/>
            <person name="Perdreau-Remington F."/>
        </authorList>
    </citation>
    <scope>NUCLEOTIDE SEQUENCE [LARGE SCALE GENOMIC DNA]</scope>
    <source>
        <strain>USA300</strain>
    </source>
</reference>
<gene>
    <name evidence="1" type="primary">rpmG1</name>
    <name type="ordered locus">SAUSA300_1233</name>
</gene>
<sequence length="52" mass="6292">MFNVRVNVTLACTECGDRNYITTKNKRNNPERIEMKKYCPRLNKYTLHRETK</sequence>
<feature type="chain" id="PRO_0000356697" description="Large ribosomal subunit protein bL33A">
    <location>
        <begin position="1"/>
        <end position="52"/>
    </location>
</feature>
<organism>
    <name type="scientific">Staphylococcus aureus (strain USA300)</name>
    <dbReference type="NCBI Taxonomy" id="367830"/>
    <lineage>
        <taxon>Bacteria</taxon>
        <taxon>Bacillati</taxon>
        <taxon>Bacillota</taxon>
        <taxon>Bacilli</taxon>
        <taxon>Bacillales</taxon>
        <taxon>Staphylococcaceae</taxon>
        <taxon>Staphylococcus</taxon>
    </lineage>
</organism>
<accession>Q2FH98</accession>
<dbReference type="EMBL" id="CP000255">
    <property type="protein sequence ID" value="ABD22856.1"/>
    <property type="molecule type" value="Genomic_DNA"/>
</dbReference>
<dbReference type="SMR" id="Q2FH98"/>
<dbReference type="KEGG" id="saa:SAUSA300_1233"/>
<dbReference type="HOGENOM" id="CLU_190949_0_2_9"/>
<dbReference type="OMA" id="RYTTMKN"/>
<dbReference type="Proteomes" id="UP000001939">
    <property type="component" value="Chromosome"/>
</dbReference>
<dbReference type="GO" id="GO:0005737">
    <property type="term" value="C:cytoplasm"/>
    <property type="evidence" value="ECO:0007669"/>
    <property type="project" value="UniProtKB-ARBA"/>
</dbReference>
<dbReference type="GO" id="GO:1990904">
    <property type="term" value="C:ribonucleoprotein complex"/>
    <property type="evidence" value="ECO:0007669"/>
    <property type="project" value="UniProtKB-KW"/>
</dbReference>
<dbReference type="GO" id="GO:0005840">
    <property type="term" value="C:ribosome"/>
    <property type="evidence" value="ECO:0007669"/>
    <property type="project" value="UniProtKB-KW"/>
</dbReference>
<dbReference type="GO" id="GO:0003735">
    <property type="term" value="F:structural constituent of ribosome"/>
    <property type="evidence" value="ECO:0007669"/>
    <property type="project" value="InterPro"/>
</dbReference>
<dbReference type="GO" id="GO:0006412">
    <property type="term" value="P:translation"/>
    <property type="evidence" value="ECO:0007669"/>
    <property type="project" value="UniProtKB-UniRule"/>
</dbReference>
<dbReference type="Gene3D" id="2.20.28.120">
    <property type="entry name" value="Ribosomal protein L33"/>
    <property type="match status" value="1"/>
</dbReference>
<dbReference type="HAMAP" id="MF_00294">
    <property type="entry name" value="Ribosomal_bL33"/>
    <property type="match status" value="1"/>
</dbReference>
<dbReference type="InterPro" id="IPR001705">
    <property type="entry name" value="Ribosomal_bL33"/>
</dbReference>
<dbReference type="InterPro" id="IPR018264">
    <property type="entry name" value="Ribosomal_bL33_CS"/>
</dbReference>
<dbReference type="InterPro" id="IPR038584">
    <property type="entry name" value="Ribosomal_bL33_sf"/>
</dbReference>
<dbReference type="InterPro" id="IPR011332">
    <property type="entry name" value="Ribosomal_zn-bd"/>
</dbReference>
<dbReference type="NCBIfam" id="NF001764">
    <property type="entry name" value="PRK00504.1"/>
    <property type="match status" value="1"/>
</dbReference>
<dbReference type="NCBIfam" id="NF001860">
    <property type="entry name" value="PRK00595.1"/>
    <property type="match status" value="1"/>
</dbReference>
<dbReference type="NCBIfam" id="TIGR01023">
    <property type="entry name" value="rpmG_bact"/>
    <property type="match status" value="1"/>
</dbReference>
<dbReference type="PANTHER" id="PTHR43168">
    <property type="entry name" value="50S RIBOSOMAL PROTEIN L33, CHLOROPLASTIC"/>
    <property type="match status" value="1"/>
</dbReference>
<dbReference type="PANTHER" id="PTHR43168:SF2">
    <property type="entry name" value="LARGE RIBOSOMAL SUBUNIT PROTEIN BL33C"/>
    <property type="match status" value="1"/>
</dbReference>
<dbReference type="Pfam" id="PF00471">
    <property type="entry name" value="Ribosomal_L33"/>
    <property type="match status" value="1"/>
</dbReference>
<dbReference type="SUPFAM" id="SSF57829">
    <property type="entry name" value="Zn-binding ribosomal proteins"/>
    <property type="match status" value="1"/>
</dbReference>
<dbReference type="PROSITE" id="PS00582">
    <property type="entry name" value="RIBOSOMAL_L33"/>
    <property type="match status" value="1"/>
</dbReference>
<protein>
    <recommendedName>
        <fullName evidence="1">Large ribosomal subunit protein bL33A</fullName>
    </recommendedName>
    <alternativeName>
        <fullName evidence="1">50S ribosomal protein L33 1</fullName>
    </alternativeName>
</protein>
<proteinExistence type="inferred from homology"/>
<evidence type="ECO:0000255" key="1">
    <source>
        <dbReference type="HAMAP-Rule" id="MF_00294"/>
    </source>
</evidence>
<keyword id="KW-0687">Ribonucleoprotein</keyword>
<keyword id="KW-0689">Ribosomal protein</keyword>
<comment type="similarity">
    <text evidence="1">Belongs to the bacterial ribosomal protein bL33 family.</text>
</comment>
<name>RL331_STAA3</name>